<proteinExistence type="inferred from homology"/>
<dbReference type="EC" id="2.4.2.7" evidence="1"/>
<dbReference type="EMBL" id="BA000012">
    <property type="protein sequence ID" value="BAB49766.1"/>
    <property type="molecule type" value="Genomic_DNA"/>
</dbReference>
<dbReference type="RefSeq" id="WP_010911115.1">
    <property type="nucleotide sequence ID" value="NC_002678.2"/>
</dbReference>
<dbReference type="SMR" id="Q98HV0"/>
<dbReference type="KEGG" id="mlo:mll2701"/>
<dbReference type="eggNOG" id="COG0503">
    <property type="taxonomic scope" value="Bacteria"/>
</dbReference>
<dbReference type="HOGENOM" id="CLU_063339_3_0_5"/>
<dbReference type="UniPathway" id="UPA00588">
    <property type="reaction ID" value="UER00646"/>
</dbReference>
<dbReference type="Proteomes" id="UP000000552">
    <property type="component" value="Chromosome"/>
</dbReference>
<dbReference type="GO" id="GO:0005737">
    <property type="term" value="C:cytoplasm"/>
    <property type="evidence" value="ECO:0007669"/>
    <property type="project" value="UniProtKB-SubCell"/>
</dbReference>
<dbReference type="GO" id="GO:0002055">
    <property type="term" value="F:adenine binding"/>
    <property type="evidence" value="ECO:0007669"/>
    <property type="project" value="TreeGrafter"/>
</dbReference>
<dbReference type="GO" id="GO:0003999">
    <property type="term" value="F:adenine phosphoribosyltransferase activity"/>
    <property type="evidence" value="ECO:0007669"/>
    <property type="project" value="UniProtKB-UniRule"/>
</dbReference>
<dbReference type="GO" id="GO:0016208">
    <property type="term" value="F:AMP binding"/>
    <property type="evidence" value="ECO:0007669"/>
    <property type="project" value="TreeGrafter"/>
</dbReference>
<dbReference type="GO" id="GO:0006168">
    <property type="term" value="P:adenine salvage"/>
    <property type="evidence" value="ECO:0007669"/>
    <property type="project" value="InterPro"/>
</dbReference>
<dbReference type="GO" id="GO:0044209">
    <property type="term" value="P:AMP salvage"/>
    <property type="evidence" value="ECO:0007669"/>
    <property type="project" value="UniProtKB-UniRule"/>
</dbReference>
<dbReference type="GO" id="GO:0006166">
    <property type="term" value="P:purine ribonucleoside salvage"/>
    <property type="evidence" value="ECO:0007669"/>
    <property type="project" value="UniProtKB-KW"/>
</dbReference>
<dbReference type="CDD" id="cd06223">
    <property type="entry name" value="PRTases_typeI"/>
    <property type="match status" value="1"/>
</dbReference>
<dbReference type="FunFam" id="3.40.50.2020:FF:000021">
    <property type="entry name" value="Adenine phosphoribosyltransferase"/>
    <property type="match status" value="1"/>
</dbReference>
<dbReference type="Gene3D" id="3.40.50.2020">
    <property type="match status" value="1"/>
</dbReference>
<dbReference type="HAMAP" id="MF_00004">
    <property type="entry name" value="Aden_phosphoribosyltr"/>
    <property type="match status" value="1"/>
</dbReference>
<dbReference type="InterPro" id="IPR005764">
    <property type="entry name" value="Ade_phspho_trans"/>
</dbReference>
<dbReference type="InterPro" id="IPR000836">
    <property type="entry name" value="PRibTrfase_dom"/>
</dbReference>
<dbReference type="InterPro" id="IPR029057">
    <property type="entry name" value="PRTase-like"/>
</dbReference>
<dbReference type="InterPro" id="IPR050054">
    <property type="entry name" value="UPRTase/APRTase"/>
</dbReference>
<dbReference type="NCBIfam" id="TIGR01090">
    <property type="entry name" value="apt"/>
    <property type="match status" value="1"/>
</dbReference>
<dbReference type="NCBIfam" id="NF002634">
    <property type="entry name" value="PRK02304.1-3"/>
    <property type="match status" value="1"/>
</dbReference>
<dbReference type="NCBIfam" id="NF002636">
    <property type="entry name" value="PRK02304.1-5"/>
    <property type="match status" value="1"/>
</dbReference>
<dbReference type="PANTHER" id="PTHR32315">
    <property type="entry name" value="ADENINE PHOSPHORIBOSYLTRANSFERASE"/>
    <property type="match status" value="1"/>
</dbReference>
<dbReference type="PANTHER" id="PTHR32315:SF3">
    <property type="entry name" value="ADENINE PHOSPHORIBOSYLTRANSFERASE"/>
    <property type="match status" value="1"/>
</dbReference>
<dbReference type="Pfam" id="PF00156">
    <property type="entry name" value="Pribosyltran"/>
    <property type="match status" value="1"/>
</dbReference>
<dbReference type="SUPFAM" id="SSF53271">
    <property type="entry name" value="PRTase-like"/>
    <property type="match status" value="1"/>
</dbReference>
<dbReference type="PROSITE" id="PS00103">
    <property type="entry name" value="PUR_PYR_PR_TRANSFER"/>
    <property type="match status" value="1"/>
</dbReference>
<evidence type="ECO:0000255" key="1">
    <source>
        <dbReference type="HAMAP-Rule" id="MF_00004"/>
    </source>
</evidence>
<gene>
    <name evidence="1" type="primary">apt</name>
    <name type="ordered locus">mll2701</name>
</gene>
<comment type="function">
    <text evidence="1">Catalyzes a salvage reaction resulting in the formation of AMP, that is energically less costly than de novo synthesis.</text>
</comment>
<comment type="catalytic activity">
    <reaction evidence="1">
        <text>AMP + diphosphate = 5-phospho-alpha-D-ribose 1-diphosphate + adenine</text>
        <dbReference type="Rhea" id="RHEA:16609"/>
        <dbReference type="ChEBI" id="CHEBI:16708"/>
        <dbReference type="ChEBI" id="CHEBI:33019"/>
        <dbReference type="ChEBI" id="CHEBI:58017"/>
        <dbReference type="ChEBI" id="CHEBI:456215"/>
        <dbReference type="EC" id="2.4.2.7"/>
    </reaction>
</comment>
<comment type="pathway">
    <text evidence="1">Purine metabolism; AMP biosynthesis via salvage pathway; AMP from adenine: step 1/1.</text>
</comment>
<comment type="subunit">
    <text evidence="1">Homodimer.</text>
</comment>
<comment type="subcellular location">
    <subcellularLocation>
        <location evidence="1">Cytoplasm</location>
    </subcellularLocation>
</comment>
<comment type="similarity">
    <text evidence="1">Belongs to the purine/pyrimidine phosphoribosyltransferase family.</text>
</comment>
<keyword id="KW-0963">Cytoplasm</keyword>
<keyword id="KW-0328">Glycosyltransferase</keyword>
<keyword id="KW-0660">Purine salvage</keyword>
<keyword id="KW-0808">Transferase</keyword>
<accession>Q98HV0</accession>
<organism>
    <name type="scientific">Mesorhizobium japonicum (strain LMG 29417 / CECT 9101 / MAFF 303099)</name>
    <name type="common">Mesorhizobium loti (strain MAFF 303099)</name>
    <dbReference type="NCBI Taxonomy" id="266835"/>
    <lineage>
        <taxon>Bacteria</taxon>
        <taxon>Pseudomonadati</taxon>
        <taxon>Pseudomonadota</taxon>
        <taxon>Alphaproteobacteria</taxon>
        <taxon>Hyphomicrobiales</taxon>
        <taxon>Phyllobacteriaceae</taxon>
        <taxon>Mesorhizobium</taxon>
    </lineage>
</organism>
<protein>
    <recommendedName>
        <fullName evidence="1">Adenine phosphoribosyltransferase</fullName>
        <shortName evidence="1">APRT</shortName>
        <ecNumber evidence="1">2.4.2.7</ecNumber>
    </recommendedName>
</protein>
<sequence length="181" mass="19398">MKPSLEDTLLASIRTIPDYPKPGILFRDITTLLGNARAFRRAIDELVHPYAGQKVDKIAGIEARGFILGGAVAHQLSAGFVPIRKKGKLPFDTVRVAYSLEYGLDEMEMHKDGVAPGEKVILVDDLIATGGTAEAAVKLLRQIGADILAACFVIDLPDLGGRAKLEALGVPVRTLIGFEGH</sequence>
<reference key="1">
    <citation type="journal article" date="2000" name="DNA Res.">
        <title>Complete genome structure of the nitrogen-fixing symbiotic bacterium Mesorhizobium loti.</title>
        <authorList>
            <person name="Kaneko T."/>
            <person name="Nakamura Y."/>
            <person name="Sato S."/>
            <person name="Asamizu E."/>
            <person name="Kato T."/>
            <person name="Sasamoto S."/>
            <person name="Watanabe A."/>
            <person name="Idesawa K."/>
            <person name="Ishikawa A."/>
            <person name="Kawashima K."/>
            <person name="Kimura T."/>
            <person name="Kishida Y."/>
            <person name="Kiyokawa C."/>
            <person name="Kohara M."/>
            <person name="Matsumoto M."/>
            <person name="Matsuno A."/>
            <person name="Mochizuki Y."/>
            <person name="Nakayama S."/>
            <person name="Nakazaki N."/>
            <person name="Shimpo S."/>
            <person name="Sugimoto M."/>
            <person name="Takeuchi C."/>
            <person name="Yamada M."/>
            <person name="Tabata S."/>
        </authorList>
    </citation>
    <scope>NUCLEOTIDE SEQUENCE [LARGE SCALE GENOMIC DNA]</scope>
    <source>
        <strain>LMG 29417 / CECT 9101 / MAFF 303099</strain>
    </source>
</reference>
<name>APT_RHILO</name>
<feature type="chain" id="PRO_0000149439" description="Adenine phosphoribosyltransferase">
    <location>
        <begin position="1"/>
        <end position="181"/>
    </location>
</feature>